<reference key="1">
    <citation type="journal article" date="1984" name="Gene">
        <title>Nucleotide sequence of cloned DNA segments of the Haemophilus influenzae bacteriophage HP1c1.</title>
        <authorList>
            <person name="Benjamin R.C."/>
            <person name="Fitzmaurice W.P."/>
            <person name="Huang P.C."/>
            <person name="Scocca J.J."/>
        </authorList>
    </citation>
    <scope>NUCLEOTIDE SEQUENCE [GENOMIC DNA]</scope>
</reference>
<reference key="2">
    <citation type="journal article" date="1996" name="Nucleic Acids Res.">
        <title>The complete nucleotide sequence of bacteriophage HP1 DNA.</title>
        <authorList>
            <person name="Esposito D."/>
            <person name="Fitzmaurice W.P."/>
            <person name="Benjamin R.C."/>
            <person name="Goodman S.D."/>
            <person name="Waldman A.S."/>
            <person name="Scocca J.J."/>
        </authorList>
    </citation>
    <scope>NUCLEOTIDE SEQUENCE [LARGE SCALE GENOMIC DNA]</scope>
</reference>
<feature type="chain" id="PRO_0000165338" description="Uncharacterized 12.7 kDa protein in lys 3'region">
    <location>
        <begin position="1"/>
        <end position="111"/>
    </location>
</feature>
<sequence length="111" mass="12651">MEKLYLDLLITGEDITLDSGNQPLICDNRISIAQDIKHAILESGLATQLIAERSRILRRDIILQMVLLVEEDVRLIPGTVSISEERLGQLFITAETYEFGRLDELELRLNE</sequence>
<protein>
    <recommendedName>
        <fullName>Uncharacterized 12.7 kDa protein in lys 3'region</fullName>
    </recommendedName>
    <alternativeName>
        <fullName>ORF28</fullName>
    </alternativeName>
</protein>
<keyword id="KW-1185">Reference proteome</keyword>
<organismHost>
    <name type="scientific">Haemophilus influenzae</name>
    <dbReference type="NCBI Taxonomy" id="727"/>
</organismHost>
<name>YO28_BPHC1</name>
<proteinExistence type="predicted"/>
<dbReference type="EMBL" id="U24159">
    <property type="protein sequence ID" value="AAB09215.1"/>
    <property type="molecule type" value="Genomic_DNA"/>
</dbReference>
<dbReference type="PIR" id="S69536">
    <property type="entry name" value="S69536"/>
</dbReference>
<dbReference type="RefSeq" id="NP_043499.1">
    <property type="nucleotide sequence ID" value="NC_001697.1"/>
</dbReference>
<dbReference type="GeneID" id="1261132"/>
<dbReference type="KEGG" id="vg:1261132"/>
<dbReference type="Proteomes" id="UP000001713">
    <property type="component" value="Segment"/>
</dbReference>
<dbReference type="InterPro" id="IPR019697">
    <property type="entry name" value="Phage_HP1_Orf28"/>
</dbReference>
<dbReference type="Pfam" id="PF10761">
    <property type="entry name" value="DUF2590"/>
    <property type="match status" value="1"/>
</dbReference>
<organism>
    <name type="scientific">Haemophilus phage HP1 (strain HP1c1)</name>
    <name type="common">Bacteriophage HP1</name>
    <dbReference type="NCBI Taxonomy" id="1289570"/>
    <lineage>
        <taxon>Viruses</taxon>
        <taxon>Duplodnaviria</taxon>
        <taxon>Heunggongvirae</taxon>
        <taxon>Uroviricota</taxon>
        <taxon>Caudoviricetes</taxon>
        <taxon>Peduoviridae</taxon>
        <taxon>Hpunavirus</taxon>
        <taxon>Haemophilus phage HP1</taxon>
    </lineage>
</organism>
<accession>P51732</accession>